<gene>
    <name type="primary">dapB</name>
    <name type="ORF">NCU02515</name>
</gene>
<evidence type="ECO:0000250" key="1"/>
<evidence type="ECO:0000255" key="2"/>
<evidence type="ECO:0000255" key="3">
    <source>
        <dbReference type="PROSITE-ProRule" id="PRU10084"/>
    </source>
</evidence>
<evidence type="ECO:0000256" key="4">
    <source>
        <dbReference type="SAM" id="MobiDB-lite"/>
    </source>
</evidence>
<evidence type="ECO:0000305" key="5"/>
<protein>
    <recommendedName>
        <fullName>Probable dipeptidyl-aminopeptidase B</fullName>
        <shortName>DPAP B</shortName>
        <ecNumber>3.4.14.5</ecNumber>
    </recommendedName>
</protein>
<sequence>MPSTYSDDNTLRSGLDRFRDHSPSQHRRSMSQETDSTVSTTSIVFDRIQERLDTKEFPARGTDGDDNDSLKDELNNDDLETGPFLGNASPSSRSNQRSSADGQRMDRSLRRWLFIVSGALVATWVIGLIFFVSSKAYKPSSSFAHDPQATVTHGSGKKVTLDQVLNNEWRAKSHSISWIAGVNGEDGLLLEKEGANKDYLVVEDVRAQNPSSVEASKSKTLIKDKLFEFANKTYWPTVTVPSRDLKKVLLATDVQNNWRHSYYAVYWIFDVETQQAEPLVPYDADARLQLASWSPTSDAIVYTRDNNMFLRKLDSDKIVQITRDGSADVFNGVPDWVYEEEVLASGVATWWSEDGNYVAFLRTNETGVPEYPIQYFVSRPSGEEPKPGEENYPEVRQIKYPKAGAHNPIVDLKFYDVKRGDVFSVDISGRFADDDRLITEVIWAGKQVLIKETNRVSDVMRVVLVDVGSRTGKAVRTVDVNDIDGGWFEISHKTKFIPADPANGRPDDGYVDTIIHNNGDHLAYFTPLDNPNPIMLTSGDYEVVDAPSAVDLQRNLVYFVSTKESSIQRHVYQVKLTGEDMTPVTDTSKEGYYAISFSTGAGYALVSYQGPNIPWQKVISTPSNPDKYEHVVEENKDLAEAAKKHELPINIYGTINVDGVELNYIERRPPHFDKNKKYPVLFQQYSGPVSQTVKKTFAVDFQSFVAAGLGYICVTVDGRGTGFIGRKNRVIIRGNLGTWESHDQIAAAKHWAQKDYIDEDRLAIWGWSYGGYMTLKTLEQDAGQTFKYGMAVAPVTDWRFYDSIYTERYMRTPQTNPEGYESAAVTNVTALSQNVRFLLMHGVADDNVHMQNSLTLLDALDQRSVENYDVQVFPDSDHGIYFHNANRIVFDKLTNWLVNAFNGEWLKIANAQPNGMKRRALPTA</sequence>
<keyword id="KW-0031">Aminopeptidase</keyword>
<keyword id="KW-0325">Glycoprotein</keyword>
<keyword id="KW-0378">Hydrolase</keyword>
<keyword id="KW-0472">Membrane</keyword>
<keyword id="KW-0645">Protease</keyword>
<keyword id="KW-1185">Reference proteome</keyword>
<keyword id="KW-0720">Serine protease</keyword>
<keyword id="KW-0735">Signal-anchor</keyword>
<keyword id="KW-0812">Transmembrane</keyword>
<keyword id="KW-1133">Transmembrane helix</keyword>
<keyword id="KW-0926">Vacuole</keyword>
<accession>Q7SHU8</accession>
<name>DAPB_NEUCR</name>
<dbReference type="EC" id="3.4.14.5"/>
<dbReference type="EMBL" id="CM002236">
    <property type="protein sequence ID" value="EAA36410.2"/>
    <property type="molecule type" value="Genomic_DNA"/>
</dbReference>
<dbReference type="RefSeq" id="XP_965646.2">
    <property type="nucleotide sequence ID" value="XM_960553.2"/>
</dbReference>
<dbReference type="SMR" id="Q7SHU8"/>
<dbReference type="FunCoup" id="Q7SHU8">
    <property type="interactions" value="302"/>
</dbReference>
<dbReference type="STRING" id="367110.Q7SHU8"/>
<dbReference type="ESTHER" id="neucr-q7shu8">
    <property type="family name" value="DPP4N_Peptidase_S9"/>
</dbReference>
<dbReference type="MEROPS" id="S09.006"/>
<dbReference type="GlyCosmos" id="Q7SHU8">
    <property type="glycosylation" value="3 sites, No reported glycans"/>
</dbReference>
<dbReference type="PaxDb" id="5141-EFNCRP00000002047"/>
<dbReference type="EnsemblFungi" id="EAA36410">
    <property type="protein sequence ID" value="EAA36410"/>
    <property type="gene ID" value="NCU02515"/>
</dbReference>
<dbReference type="GeneID" id="3881844"/>
<dbReference type="KEGG" id="ncr:NCU02515"/>
<dbReference type="VEuPathDB" id="FungiDB:NCU02515"/>
<dbReference type="HOGENOM" id="CLU_006105_0_1_1"/>
<dbReference type="InParanoid" id="Q7SHU8"/>
<dbReference type="OrthoDB" id="16520at2759"/>
<dbReference type="Proteomes" id="UP000001805">
    <property type="component" value="Chromosome 1, Linkage Group I"/>
</dbReference>
<dbReference type="GO" id="GO:0000329">
    <property type="term" value="C:fungal-type vacuole membrane"/>
    <property type="evidence" value="ECO:0007669"/>
    <property type="project" value="EnsemblFungi"/>
</dbReference>
<dbReference type="GO" id="GO:0005886">
    <property type="term" value="C:plasma membrane"/>
    <property type="evidence" value="ECO:0000318"/>
    <property type="project" value="GO_Central"/>
</dbReference>
<dbReference type="GO" id="GO:0004177">
    <property type="term" value="F:aminopeptidase activity"/>
    <property type="evidence" value="ECO:0007669"/>
    <property type="project" value="UniProtKB-KW"/>
</dbReference>
<dbReference type="GO" id="GO:0008239">
    <property type="term" value="F:dipeptidyl-peptidase activity"/>
    <property type="evidence" value="ECO:0000318"/>
    <property type="project" value="GO_Central"/>
</dbReference>
<dbReference type="GO" id="GO:0004252">
    <property type="term" value="F:serine-type endopeptidase activity"/>
    <property type="evidence" value="ECO:0007669"/>
    <property type="project" value="InterPro"/>
</dbReference>
<dbReference type="GO" id="GO:0006508">
    <property type="term" value="P:proteolysis"/>
    <property type="evidence" value="ECO:0000318"/>
    <property type="project" value="GO_Central"/>
</dbReference>
<dbReference type="FunFam" id="3.40.50.1820:FF:000003">
    <property type="entry name" value="Dipeptidyl peptidase 4"/>
    <property type="match status" value="1"/>
</dbReference>
<dbReference type="Gene3D" id="3.40.50.1820">
    <property type="entry name" value="alpha/beta hydrolase"/>
    <property type="match status" value="1"/>
</dbReference>
<dbReference type="Gene3D" id="2.140.10.30">
    <property type="entry name" value="Dipeptidylpeptidase IV, N-terminal domain"/>
    <property type="match status" value="1"/>
</dbReference>
<dbReference type="InterPro" id="IPR029058">
    <property type="entry name" value="AB_hydrolase_fold"/>
</dbReference>
<dbReference type="InterPro" id="IPR002471">
    <property type="entry name" value="Pept_S9_AS"/>
</dbReference>
<dbReference type="InterPro" id="IPR001375">
    <property type="entry name" value="Peptidase_S9_cat"/>
</dbReference>
<dbReference type="InterPro" id="IPR002469">
    <property type="entry name" value="Peptidase_S9B_N"/>
</dbReference>
<dbReference type="InterPro" id="IPR050278">
    <property type="entry name" value="Serine_Prot_S9B/DPPIV"/>
</dbReference>
<dbReference type="PANTHER" id="PTHR11731:SF200">
    <property type="entry name" value="DIPEPTIDYL PEPTIDASE 10, ISOFORM B"/>
    <property type="match status" value="1"/>
</dbReference>
<dbReference type="PANTHER" id="PTHR11731">
    <property type="entry name" value="PROTEASE FAMILY S9B,C DIPEPTIDYL-PEPTIDASE IV-RELATED"/>
    <property type="match status" value="1"/>
</dbReference>
<dbReference type="Pfam" id="PF00930">
    <property type="entry name" value="DPPIV_N"/>
    <property type="match status" value="1"/>
</dbReference>
<dbReference type="Pfam" id="PF00326">
    <property type="entry name" value="Peptidase_S9"/>
    <property type="match status" value="1"/>
</dbReference>
<dbReference type="SUPFAM" id="SSF53474">
    <property type="entry name" value="alpha/beta-Hydrolases"/>
    <property type="match status" value="1"/>
</dbReference>
<dbReference type="SUPFAM" id="SSF82171">
    <property type="entry name" value="DPP6 N-terminal domain-like"/>
    <property type="match status" value="1"/>
</dbReference>
<dbReference type="PROSITE" id="PS00708">
    <property type="entry name" value="PRO_ENDOPEP_SER"/>
    <property type="match status" value="1"/>
</dbReference>
<organism>
    <name type="scientific">Neurospora crassa (strain ATCC 24698 / 74-OR23-1A / CBS 708.71 / DSM 1257 / FGSC 987)</name>
    <dbReference type="NCBI Taxonomy" id="367110"/>
    <lineage>
        <taxon>Eukaryota</taxon>
        <taxon>Fungi</taxon>
        <taxon>Dikarya</taxon>
        <taxon>Ascomycota</taxon>
        <taxon>Pezizomycotina</taxon>
        <taxon>Sordariomycetes</taxon>
        <taxon>Sordariomycetidae</taxon>
        <taxon>Sordariales</taxon>
        <taxon>Sordariaceae</taxon>
        <taxon>Neurospora</taxon>
    </lineage>
</organism>
<proteinExistence type="inferred from homology"/>
<feature type="chain" id="PRO_0000412152" description="Probable dipeptidyl-aminopeptidase B">
    <location>
        <begin position="1"/>
        <end position="924"/>
    </location>
</feature>
<feature type="topological domain" description="Cytoplasmic" evidence="2">
    <location>
        <begin position="1"/>
        <end position="111"/>
    </location>
</feature>
<feature type="transmembrane region" description="Helical; Signal-anchor for type II membrane protein" evidence="2">
    <location>
        <begin position="112"/>
        <end position="132"/>
    </location>
</feature>
<feature type="topological domain" description="Vacuolar" evidence="2">
    <location>
        <begin position="133"/>
        <end position="924"/>
    </location>
</feature>
<feature type="region of interest" description="Disordered" evidence="4">
    <location>
        <begin position="1"/>
        <end position="102"/>
    </location>
</feature>
<feature type="compositionally biased region" description="Polar residues" evidence="4">
    <location>
        <begin position="1"/>
        <end position="12"/>
    </location>
</feature>
<feature type="compositionally biased region" description="Basic and acidic residues" evidence="4">
    <location>
        <begin position="14"/>
        <end position="23"/>
    </location>
</feature>
<feature type="compositionally biased region" description="Polar residues" evidence="4">
    <location>
        <begin position="31"/>
        <end position="43"/>
    </location>
</feature>
<feature type="compositionally biased region" description="Basic and acidic residues" evidence="4">
    <location>
        <begin position="47"/>
        <end position="58"/>
    </location>
</feature>
<feature type="compositionally biased region" description="Low complexity" evidence="4">
    <location>
        <begin position="87"/>
        <end position="100"/>
    </location>
</feature>
<feature type="active site" description="Charge relay system" evidence="3">
    <location>
        <position position="768"/>
    </location>
</feature>
<feature type="active site" description="Charge relay system" evidence="3">
    <location>
        <position position="845"/>
    </location>
</feature>
<feature type="active site" description="Charge relay system" evidence="3">
    <location>
        <position position="878"/>
    </location>
</feature>
<feature type="glycosylation site" description="N-linked (GlcNAc...) asparagine" evidence="2">
    <location>
        <position position="231"/>
    </location>
</feature>
<feature type="glycosylation site" description="N-linked (GlcNAc...) asparagine" evidence="2">
    <location>
        <position position="364"/>
    </location>
</feature>
<feature type="glycosylation site" description="N-linked (GlcNAc...) asparagine" evidence="2">
    <location>
        <position position="827"/>
    </location>
</feature>
<reference key="1">
    <citation type="journal article" date="2003" name="Nature">
        <title>The genome sequence of the filamentous fungus Neurospora crassa.</title>
        <authorList>
            <person name="Galagan J.E."/>
            <person name="Calvo S.E."/>
            <person name="Borkovich K.A."/>
            <person name="Selker E.U."/>
            <person name="Read N.D."/>
            <person name="Jaffe D.B."/>
            <person name="FitzHugh W."/>
            <person name="Ma L.-J."/>
            <person name="Smirnov S."/>
            <person name="Purcell S."/>
            <person name="Rehman B."/>
            <person name="Elkins T."/>
            <person name="Engels R."/>
            <person name="Wang S."/>
            <person name="Nielsen C.B."/>
            <person name="Butler J."/>
            <person name="Endrizzi M."/>
            <person name="Qui D."/>
            <person name="Ianakiev P."/>
            <person name="Bell-Pedersen D."/>
            <person name="Nelson M.A."/>
            <person name="Werner-Washburne M."/>
            <person name="Selitrennikoff C.P."/>
            <person name="Kinsey J.A."/>
            <person name="Braun E.L."/>
            <person name="Zelter A."/>
            <person name="Schulte U."/>
            <person name="Kothe G.O."/>
            <person name="Jedd G."/>
            <person name="Mewes H.-W."/>
            <person name="Staben C."/>
            <person name="Marcotte E."/>
            <person name="Greenberg D."/>
            <person name="Roy A."/>
            <person name="Foley K."/>
            <person name="Naylor J."/>
            <person name="Stange-Thomann N."/>
            <person name="Barrett R."/>
            <person name="Gnerre S."/>
            <person name="Kamal M."/>
            <person name="Kamvysselis M."/>
            <person name="Mauceli E.W."/>
            <person name="Bielke C."/>
            <person name="Rudd S."/>
            <person name="Frishman D."/>
            <person name="Krystofova S."/>
            <person name="Rasmussen C."/>
            <person name="Metzenberg R.L."/>
            <person name="Perkins D.D."/>
            <person name="Kroken S."/>
            <person name="Cogoni C."/>
            <person name="Macino G."/>
            <person name="Catcheside D.E.A."/>
            <person name="Li W."/>
            <person name="Pratt R.J."/>
            <person name="Osmani S.A."/>
            <person name="DeSouza C.P.C."/>
            <person name="Glass N.L."/>
            <person name="Orbach M.J."/>
            <person name="Berglund J.A."/>
            <person name="Voelker R."/>
            <person name="Yarden O."/>
            <person name="Plamann M."/>
            <person name="Seiler S."/>
            <person name="Dunlap J.C."/>
            <person name="Radford A."/>
            <person name="Aramayo R."/>
            <person name="Natvig D.O."/>
            <person name="Alex L.A."/>
            <person name="Mannhaupt G."/>
            <person name="Ebbole D.J."/>
            <person name="Freitag M."/>
            <person name="Paulsen I."/>
            <person name="Sachs M.S."/>
            <person name="Lander E.S."/>
            <person name="Nusbaum C."/>
            <person name="Birren B.W."/>
        </authorList>
    </citation>
    <scope>NUCLEOTIDE SEQUENCE [LARGE SCALE GENOMIC DNA]</scope>
    <source>
        <strain>ATCC 24698 / 74-OR23-1A / CBS 708.71 / DSM 1257 / FGSC 987</strain>
    </source>
</reference>
<comment type="function">
    <text evidence="1">Type IV dipeptidyl-peptidase which removes N-terminal dipeptides sequentially from polypeptides having unsubstituted N-termini provided that the penultimate residue is proline.</text>
</comment>
<comment type="catalytic activity">
    <reaction evidence="3">
        <text>Release of an N-terminal dipeptide, Xaa-Yaa-|-Zaa-, from a polypeptide, preferentially when Yaa is Pro, provided Zaa is neither Pro nor hydroxyproline.</text>
        <dbReference type="EC" id="3.4.14.5"/>
    </reaction>
</comment>
<comment type="subcellular location">
    <subcellularLocation>
        <location evidence="1">Vacuole membrane</location>
        <topology evidence="1">Single-pass type II membrane protein</topology>
    </subcellularLocation>
    <text evidence="1">Lysosome-like vacuoles.</text>
</comment>
<comment type="similarity">
    <text evidence="5">Belongs to the peptidase S9B family.</text>
</comment>